<keyword id="KW-0903">Direct protein sequencing</keyword>
<keyword id="KW-0324">Glycolysis</keyword>
<keyword id="KW-0456">Lyase</keyword>
<keyword id="KW-0479">Metal-binding</keyword>
<keyword id="KW-1185">Reference proteome</keyword>
<keyword id="KW-0862">Zinc</keyword>
<protein>
    <recommendedName>
        <fullName>Fructose-bisphosphate aldolase class 2</fullName>
        <shortName>FBP aldolase</shortName>
        <shortName>FBPA</shortName>
        <ecNumber>4.1.2.13</ecNumber>
    </recommendedName>
    <alternativeName>
        <fullName>Fructose-1,6-bisphosphate aldolase</fullName>
    </alternativeName>
    <alternativeName>
        <fullName>Fructose-bisphosphate aldolase class II</fullName>
    </alternativeName>
</protein>
<organism>
    <name type="scientific">Synechocystis sp. (strain ATCC 27184 / PCC 6803 / Kazusa)</name>
    <dbReference type="NCBI Taxonomy" id="1111708"/>
    <lineage>
        <taxon>Bacteria</taxon>
        <taxon>Bacillati</taxon>
        <taxon>Cyanobacteriota</taxon>
        <taxon>Cyanophyceae</taxon>
        <taxon>Synechococcales</taxon>
        <taxon>Merismopediaceae</taxon>
        <taxon>Synechocystis</taxon>
    </lineage>
</organism>
<gene>
    <name type="primary">fbaA</name>
    <name type="synonym">fda</name>
    <name type="ordered locus">sll0018</name>
</gene>
<name>ALF2_SYNY3</name>
<evidence type="ECO:0000250" key="1"/>
<evidence type="ECO:0000269" key="2">
    <source>
    </source>
</evidence>
<evidence type="ECO:0000305" key="3"/>
<proteinExistence type="evidence at protein level"/>
<sequence length="359" mass="38972">MALVPMRLLLDHAAENGYGIPAFNVNNMEQIISIMQAADETDSPVILQASRGARSYAGENFLRHLVLGAVETYPHIPIAMHQDHGNSPATCYSAIRNGFTSVMMDGSLEADAKTPASFEYNVNVTAEVVKVAHSVGASVEGELGCLGSLETGQGEAEDGHGFEGKLDHSQLLTDPEEAVEFVNKTQVDALAVAIGTSHGAYKFTRKPTGEVLAISRIEEIHRLLPNTHLVMHGSSSVPQEWIDMINEFGGAIPETYGVPVEEIQKGIKSGVRKVNIDTDNRLAITAAFREAAAKDPKNFDPRHFLKPSIKYMKQVCADRYQQFWTAGNASKIKQLTLDDYAAKYAKGELTATSRTSVAV</sequence>
<comment type="function">
    <text evidence="1">Catalyzes the aldol condensation of dihydroxyacetone phosphate (DHAP or glycerone-phosphate) with glyceraldehyde 3-phosphate (G3P) to form fructose 1,6-bisphosphate (FBP) in gluconeogenesis and the reverse reaction in glycolysis.</text>
</comment>
<comment type="catalytic activity">
    <reaction>
        <text>beta-D-fructose 1,6-bisphosphate = D-glyceraldehyde 3-phosphate + dihydroxyacetone phosphate</text>
        <dbReference type="Rhea" id="RHEA:14729"/>
        <dbReference type="ChEBI" id="CHEBI:32966"/>
        <dbReference type="ChEBI" id="CHEBI:57642"/>
        <dbReference type="ChEBI" id="CHEBI:59776"/>
        <dbReference type="EC" id="4.1.2.13"/>
    </reaction>
</comment>
<comment type="cofactor">
    <cofactor evidence="1">
        <name>Zn(2+)</name>
        <dbReference type="ChEBI" id="CHEBI:29105"/>
    </cofactor>
    <text evidence="1">Binds 2 Zn(2+) ions per subunit. One is catalytic and the other provides a structural contribution.</text>
</comment>
<comment type="pathway">
    <text>Carbohydrate degradation; glycolysis; D-glyceraldehyde 3-phosphate and glycerone phosphate from D-glucose: step 4/4.</text>
</comment>
<comment type="similarity">
    <text evidence="3">Belongs to the class II fructose-bisphosphate aldolase family.</text>
</comment>
<accession>Q55664</accession>
<dbReference type="EC" id="4.1.2.13"/>
<dbReference type="EMBL" id="BA000022">
    <property type="protein sequence ID" value="BAA10184.1"/>
    <property type="molecule type" value="Genomic_DNA"/>
</dbReference>
<dbReference type="PIR" id="S76332">
    <property type="entry name" value="S76332"/>
</dbReference>
<dbReference type="SMR" id="Q55664"/>
<dbReference type="FunCoup" id="Q55664">
    <property type="interactions" value="428"/>
</dbReference>
<dbReference type="IntAct" id="Q55664">
    <property type="interactions" value="1"/>
</dbReference>
<dbReference type="STRING" id="1148.gene:10499681"/>
<dbReference type="BindingDB" id="Q55664"/>
<dbReference type="ChEMBL" id="CHEMBL4523320"/>
<dbReference type="PaxDb" id="1148-1001557"/>
<dbReference type="EnsemblBacteria" id="BAA10184">
    <property type="protein sequence ID" value="BAA10184"/>
    <property type="gene ID" value="BAA10184"/>
</dbReference>
<dbReference type="KEGG" id="syn:sll0018"/>
<dbReference type="eggNOG" id="COG0191">
    <property type="taxonomic scope" value="Bacteria"/>
</dbReference>
<dbReference type="InParanoid" id="Q55664"/>
<dbReference type="PhylomeDB" id="Q55664"/>
<dbReference type="BioCyc" id="MetaCyc:FBAASYN-MONOMER"/>
<dbReference type="BRENDA" id="4.1.2.13">
    <property type="organism ID" value="6192"/>
</dbReference>
<dbReference type="SABIO-RK" id="Q55664"/>
<dbReference type="UniPathway" id="UPA00109">
    <property type="reaction ID" value="UER00183"/>
</dbReference>
<dbReference type="Proteomes" id="UP000001425">
    <property type="component" value="Chromosome"/>
</dbReference>
<dbReference type="GO" id="GO:0004332">
    <property type="term" value="F:fructose-bisphosphate aldolase activity"/>
    <property type="evidence" value="ECO:0007669"/>
    <property type="project" value="UniProtKB-EC"/>
</dbReference>
<dbReference type="GO" id="GO:0008270">
    <property type="term" value="F:zinc ion binding"/>
    <property type="evidence" value="ECO:0007669"/>
    <property type="project" value="InterPro"/>
</dbReference>
<dbReference type="GO" id="GO:0006096">
    <property type="term" value="P:glycolytic process"/>
    <property type="evidence" value="ECO:0007669"/>
    <property type="project" value="UniProtKB-UniPathway"/>
</dbReference>
<dbReference type="CDD" id="cd00947">
    <property type="entry name" value="TBP_aldolase_IIB"/>
    <property type="match status" value="1"/>
</dbReference>
<dbReference type="FunFam" id="3.20.20.70:FF:000111">
    <property type="entry name" value="Fructose-1,6-bisphosphate aldolase"/>
    <property type="match status" value="1"/>
</dbReference>
<dbReference type="Gene3D" id="3.20.20.70">
    <property type="entry name" value="Aldolase class I"/>
    <property type="match status" value="1"/>
</dbReference>
<dbReference type="InterPro" id="IPR013785">
    <property type="entry name" value="Aldolase_TIM"/>
</dbReference>
<dbReference type="InterPro" id="IPR050246">
    <property type="entry name" value="Class_II_FBP_aldolase"/>
</dbReference>
<dbReference type="InterPro" id="IPR000771">
    <property type="entry name" value="FBA_II"/>
</dbReference>
<dbReference type="InterPro" id="IPR006412">
    <property type="entry name" value="Fruct_bisP_Calv"/>
</dbReference>
<dbReference type="NCBIfam" id="TIGR00167">
    <property type="entry name" value="cbbA"/>
    <property type="match status" value="1"/>
</dbReference>
<dbReference type="NCBIfam" id="TIGR01521">
    <property type="entry name" value="FruBisAldo_II_B"/>
    <property type="match status" value="1"/>
</dbReference>
<dbReference type="PANTHER" id="PTHR30304">
    <property type="entry name" value="D-TAGATOSE-1,6-BISPHOSPHATE ALDOLASE"/>
    <property type="match status" value="1"/>
</dbReference>
<dbReference type="PANTHER" id="PTHR30304:SF0">
    <property type="entry name" value="D-TAGATOSE-1,6-BISPHOSPHATE ALDOLASE SUBUNIT GATY-RELATED"/>
    <property type="match status" value="1"/>
</dbReference>
<dbReference type="Pfam" id="PF01116">
    <property type="entry name" value="F_bP_aldolase"/>
    <property type="match status" value="1"/>
</dbReference>
<dbReference type="PIRSF" id="PIRSF001359">
    <property type="entry name" value="F_bP_aldolase_II"/>
    <property type="match status" value="1"/>
</dbReference>
<dbReference type="SUPFAM" id="SSF51569">
    <property type="entry name" value="Aldolase"/>
    <property type="match status" value="1"/>
</dbReference>
<dbReference type="PROSITE" id="PS00602">
    <property type="entry name" value="ALDOLASE_CLASS_II_1"/>
    <property type="match status" value="1"/>
</dbReference>
<dbReference type="PROSITE" id="PS00806">
    <property type="entry name" value="ALDOLASE_CLASS_II_2"/>
    <property type="match status" value="1"/>
</dbReference>
<reference key="1">
    <citation type="journal article" date="1995" name="DNA Res.">
        <title>Sequence analysis of the genome of the unicellular cyanobacterium Synechocystis sp. strain PCC6803. I. Sequence features in the 1 Mb region from map positions 64% to 92% of the genome.</title>
        <authorList>
            <person name="Kaneko T."/>
            <person name="Tanaka A."/>
            <person name="Sato S."/>
            <person name="Kotani H."/>
            <person name="Sazuka T."/>
            <person name="Miyajima N."/>
            <person name="Sugiura M."/>
            <person name="Tabata S."/>
        </authorList>
    </citation>
    <scope>NUCLEOTIDE SEQUENCE [LARGE SCALE GENOMIC DNA]</scope>
    <source>
        <strain>ATCC 27184 / PCC 6803 / N-1</strain>
    </source>
</reference>
<reference key="2">
    <citation type="journal article" date="1996" name="DNA Res.">
        <title>Sequence analysis of the genome of the unicellular cyanobacterium Synechocystis sp. strain PCC6803. II. Sequence determination of the entire genome and assignment of potential protein-coding regions.</title>
        <authorList>
            <person name="Kaneko T."/>
            <person name="Sato S."/>
            <person name="Kotani H."/>
            <person name="Tanaka A."/>
            <person name="Asamizu E."/>
            <person name="Nakamura Y."/>
            <person name="Miyajima N."/>
            <person name="Hirosawa M."/>
            <person name="Sugiura M."/>
            <person name="Sasamoto S."/>
            <person name="Kimura T."/>
            <person name="Hosouchi T."/>
            <person name="Matsuno A."/>
            <person name="Muraki A."/>
            <person name="Nakazaki N."/>
            <person name="Naruo K."/>
            <person name="Okumura S."/>
            <person name="Shimpo S."/>
            <person name="Takeuchi C."/>
            <person name="Wada T."/>
            <person name="Watanabe A."/>
            <person name="Yamada M."/>
            <person name="Yasuda M."/>
            <person name="Tabata S."/>
        </authorList>
    </citation>
    <scope>NUCLEOTIDE SEQUENCE [LARGE SCALE GENOMIC DNA]</scope>
    <source>
        <strain>ATCC 27184 / PCC 6803 / Kazusa</strain>
    </source>
</reference>
<reference key="3">
    <citation type="journal article" date="1997" name="Electrophoresis">
        <title>Towards a proteome project of cyanobacterium Synechocystis sp. strain PCC6803: linking 130 protein spots with their respective genes.</title>
        <authorList>
            <person name="Sazuka T."/>
            <person name="Ohara O."/>
        </authorList>
    </citation>
    <scope>PROTEIN SEQUENCE OF 2-21</scope>
</reference>
<feature type="initiator methionine" description="Removed" evidence="2">
    <location>
        <position position="1"/>
    </location>
</feature>
<feature type="chain" id="PRO_0000178751" description="Fructose-bisphosphate aldolase class 2">
    <location>
        <begin position="2"/>
        <end position="359"/>
    </location>
</feature>
<feature type="active site" description="Proton donor" evidence="1">
    <location>
        <position position="83"/>
    </location>
</feature>
<feature type="binding site" evidence="1">
    <location>
        <position position="50"/>
    </location>
    <ligand>
        <name>D-glyceraldehyde 3-phosphate</name>
        <dbReference type="ChEBI" id="CHEBI:59776"/>
    </ligand>
</feature>
<feature type="binding site" evidence="1">
    <location>
        <position position="84"/>
    </location>
    <ligand>
        <name>Zn(2+)</name>
        <dbReference type="ChEBI" id="CHEBI:29105"/>
        <label>1</label>
        <note>catalytic</note>
    </ligand>
</feature>
<feature type="binding site" evidence="1">
    <location>
        <position position="105"/>
    </location>
    <ligand>
        <name>Zn(2+)</name>
        <dbReference type="ChEBI" id="CHEBI:29105"/>
        <label>2</label>
    </ligand>
</feature>
<feature type="binding site" evidence="1">
    <location>
        <position position="142"/>
    </location>
    <ligand>
        <name>Zn(2+)</name>
        <dbReference type="ChEBI" id="CHEBI:29105"/>
        <label>2</label>
    </ligand>
</feature>
<feature type="binding site" evidence="1">
    <location>
        <position position="198"/>
    </location>
    <ligand>
        <name>Zn(2+)</name>
        <dbReference type="ChEBI" id="CHEBI:29105"/>
        <label>1</label>
        <note>catalytic</note>
    </ligand>
</feature>
<feature type="binding site" evidence="1">
    <location>
        <position position="199"/>
    </location>
    <ligand>
        <name>dihydroxyacetone phosphate</name>
        <dbReference type="ChEBI" id="CHEBI:57642"/>
    </ligand>
</feature>
<feature type="binding site" evidence="1">
    <location>
        <position position="232"/>
    </location>
    <ligand>
        <name>Zn(2+)</name>
        <dbReference type="ChEBI" id="CHEBI:29105"/>
        <label>1</label>
        <note>catalytic</note>
    </ligand>
</feature>
<feature type="binding site" evidence="1">
    <location>
        <begin position="233"/>
        <end position="235"/>
    </location>
    <ligand>
        <name>dihydroxyacetone phosphate</name>
        <dbReference type="ChEBI" id="CHEBI:57642"/>
    </ligand>
</feature>
<feature type="binding site" evidence="1">
    <location>
        <begin position="275"/>
        <end position="278"/>
    </location>
    <ligand>
        <name>dihydroxyacetone phosphate</name>
        <dbReference type="ChEBI" id="CHEBI:57642"/>
    </ligand>
</feature>